<evidence type="ECO:0000255" key="1">
    <source>
        <dbReference type="HAMAP-Rule" id="MF_01333"/>
    </source>
</evidence>
<evidence type="ECO:0000305" key="2"/>
<protein>
    <recommendedName>
        <fullName evidence="1">Large ribosomal subunit protein uL5</fullName>
    </recommendedName>
    <alternativeName>
        <fullName evidence="2">50S ribosomal protein L5</fullName>
    </alternativeName>
</protein>
<sequence>MVPRLKSKYEKEIRPTLQKSLGFQSVMRVPKLEKIVINVGMGEAHTNPKAMEACLVEIGQITGQRPVKTFAKKSIAGFKVREGMVLGCKVTLRGHHMYEFLDRFINVALPRVRDFRGVNPKGFDGRGNYNLSVREQIIFPEIQFDKINTIYGINITFVTNTEVDKEAFELFQAFGMPYRTAGK</sequence>
<reference key="1">
    <citation type="journal article" date="2008" name="PLoS ONE">
        <title>Genome sequence of the saprophyte Leptospira biflexa provides insights into the evolution of Leptospira and the pathogenesis of leptospirosis.</title>
        <authorList>
            <person name="Picardeau M."/>
            <person name="Bulach D.M."/>
            <person name="Bouchier C."/>
            <person name="Zuerner R.L."/>
            <person name="Zidane N."/>
            <person name="Wilson P.J."/>
            <person name="Creno S."/>
            <person name="Kuczek E.S."/>
            <person name="Bommezzadri S."/>
            <person name="Davis J.C."/>
            <person name="McGrath A."/>
            <person name="Johnson M.J."/>
            <person name="Boursaux-Eude C."/>
            <person name="Seemann T."/>
            <person name="Rouy Z."/>
            <person name="Coppel R.L."/>
            <person name="Rood J.I."/>
            <person name="Lajus A."/>
            <person name="Davies J.K."/>
            <person name="Medigue C."/>
            <person name="Adler B."/>
        </authorList>
    </citation>
    <scope>NUCLEOTIDE SEQUENCE [LARGE SCALE GENOMIC DNA]</scope>
    <source>
        <strain>Patoc 1 / ATCC 23582 / Paris</strain>
    </source>
</reference>
<keyword id="KW-1185">Reference proteome</keyword>
<keyword id="KW-0687">Ribonucleoprotein</keyword>
<keyword id="KW-0689">Ribosomal protein</keyword>
<keyword id="KW-0694">RNA-binding</keyword>
<keyword id="KW-0699">rRNA-binding</keyword>
<keyword id="KW-0820">tRNA-binding</keyword>
<name>RL5_LEPBP</name>
<accession>B0SSG5</accession>
<dbReference type="EMBL" id="CP000786">
    <property type="protein sequence ID" value="ABZ98055.1"/>
    <property type="molecule type" value="Genomic_DNA"/>
</dbReference>
<dbReference type="RefSeq" id="WP_012388930.1">
    <property type="nucleotide sequence ID" value="NC_010602.1"/>
</dbReference>
<dbReference type="SMR" id="B0SSG5"/>
<dbReference type="STRING" id="456481.LEPBI_I1952"/>
<dbReference type="KEGG" id="lbi:LEPBI_I1952"/>
<dbReference type="HOGENOM" id="CLU_061015_2_1_12"/>
<dbReference type="OrthoDB" id="9806626at2"/>
<dbReference type="BioCyc" id="LBIF456481:LEPBI_RS09645-MONOMER"/>
<dbReference type="Proteomes" id="UP000001847">
    <property type="component" value="Chromosome I"/>
</dbReference>
<dbReference type="GO" id="GO:1990904">
    <property type="term" value="C:ribonucleoprotein complex"/>
    <property type="evidence" value="ECO:0007669"/>
    <property type="project" value="UniProtKB-KW"/>
</dbReference>
<dbReference type="GO" id="GO:0005840">
    <property type="term" value="C:ribosome"/>
    <property type="evidence" value="ECO:0007669"/>
    <property type="project" value="UniProtKB-KW"/>
</dbReference>
<dbReference type="GO" id="GO:0019843">
    <property type="term" value="F:rRNA binding"/>
    <property type="evidence" value="ECO:0007669"/>
    <property type="project" value="UniProtKB-UniRule"/>
</dbReference>
<dbReference type="GO" id="GO:0003735">
    <property type="term" value="F:structural constituent of ribosome"/>
    <property type="evidence" value="ECO:0007669"/>
    <property type="project" value="InterPro"/>
</dbReference>
<dbReference type="GO" id="GO:0000049">
    <property type="term" value="F:tRNA binding"/>
    <property type="evidence" value="ECO:0007669"/>
    <property type="project" value="UniProtKB-UniRule"/>
</dbReference>
<dbReference type="GO" id="GO:0006412">
    <property type="term" value="P:translation"/>
    <property type="evidence" value="ECO:0007669"/>
    <property type="project" value="UniProtKB-UniRule"/>
</dbReference>
<dbReference type="FunFam" id="3.30.1440.10:FF:000001">
    <property type="entry name" value="50S ribosomal protein L5"/>
    <property type="match status" value="1"/>
</dbReference>
<dbReference type="Gene3D" id="3.30.1440.10">
    <property type="match status" value="1"/>
</dbReference>
<dbReference type="HAMAP" id="MF_01333_B">
    <property type="entry name" value="Ribosomal_uL5_B"/>
    <property type="match status" value="1"/>
</dbReference>
<dbReference type="InterPro" id="IPR002132">
    <property type="entry name" value="Ribosomal_uL5"/>
</dbReference>
<dbReference type="InterPro" id="IPR020930">
    <property type="entry name" value="Ribosomal_uL5_bac-type"/>
</dbReference>
<dbReference type="InterPro" id="IPR031309">
    <property type="entry name" value="Ribosomal_uL5_C"/>
</dbReference>
<dbReference type="InterPro" id="IPR020929">
    <property type="entry name" value="Ribosomal_uL5_CS"/>
</dbReference>
<dbReference type="InterPro" id="IPR022803">
    <property type="entry name" value="Ribosomal_uL5_dom_sf"/>
</dbReference>
<dbReference type="InterPro" id="IPR031310">
    <property type="entry name" value="Ribosomal_uL5_N"/>
</dbReference>
<dbReference type="NCBIfam" id="NF000585">
    <property type="entry name" value="PRK00010.1"/>
    <property type="match status" value="1"/>
</dbReference>
<dbReference type="PANTHER" id="PTHR11994">
    <property type="entry name" value="60S RIBOSOMAL PROTEIN L11-RELATED"/>
    <property type="match status" value="1"/>
</dbReference>
<dbReference type="Pfam" id="PF00281">
    <property type="entry name" value="Ribosomal_L5"/>
    <property type="match status" value="1"/>
</dbReference>
<dbReference type="Pfam" id="PF00673">
    <property type="entry name" value="Ribosomal_L5_C"/>
    <property type="match status" value="1"/>
</dbReference>
<dbReference type="PIRSF" id="PIRSF002161">
    <property type="entry name" value="Ribosomal_L5"/>
    <property type="match status" value="1"/>
</dbReference>
<dbReference type="SUPFAM" id="SSF55282">
    <property type="entry name" value="RL5-like"/>
    <property type="match status" value="1"/>
</dbReference>
<dbReference type="PROSITE" id="PS00358">
    <property type="entry name" value="RIBOSOMAL_L5"/>
    <property type="match status" value="1"/>
</dbReference>
<proteinExistence type="inferred from homology"/>
<gene>
    <name evidence="1" type="primary">rplE</name>
    <name type="ordered locus">LEPBI_I1952</name>
</gene>
<organism>
    <name type="scientific">Leptospira biflexa serovar Patoc (strain Patoc 1 / ATCC 23582 / Paris)</name>
    <dbReference type="NCBI Taxonomy" id="456481"/>
    <lineage>
        <taxon>Bacteria</taxon>
        <taxon>Pseudomonadati</taxon>
        <taxon>Spirochaetota</taxon>
        <taxon>Spirochaetia</taxon>
        <taxon>Leptospirales</taxon>
        <taxon>Leptospiraceae</taxon>
        <taxon>Leptospira</taxon>
    </lineage>
</organism>
<comment type="function">
    <text evidence="1">This is one of the proteins that bind and probably mediate the attachment of the 5S RNA into the large ribosomal subunit, where it forms part of the central protuberance. In the 70S ribosome it contacts protein S13 of the 30S subunit (bridge B1b), connecting the 2 subunits; this bridge is implicated in subunit movement. Contacts the P site tRNA; the 5S rRNA and some of its associated proteins might help stabilize positioning of ribosome-bound tRNAs.</text>
</comment>
<comment type="subunit">
    <text evidence="1">Part of the 50S ribosomal subunit; part of the 5S rRNA/L5/L18/L25 subcomplex. Contacts the 5S rRNA and the P site tRNA. Forms a bridge to the 30S subunit in the 70S ribosome.</text>
</comment>
<comment type="similarity">
    <text evidence="1">Belongs to the universal ribosomal protein uL5 family.</text>
</comment>
<feature type="chain" id="PRO_1000142419" description="Large ribosomal subunit protein uL5">
    <location>
        <begin position="1"/>
        <end position="183"/>
    </location>
</feature>